<evidence type="ECO:0000250" key="1">
    <source>
        <dbReference type="UniProtKB" id="P13113"/>
    </source>
</evidence>
<evidence type="ECO:0000255" key="2"/>
<evidence type="ECO:0000255" key="3">
    <source>
        <dbReference type="PROSITE-ProRule" id="PRU00280"/>
    </source>
</evidence>
<evidence type="ECO:0000269" key="4">
    <source>
    </source>
</evidence>
<evidence type="ECO:0000303" key="5">
    <source>
    </source>
</evidence>
<evidence type="ECO:0000305" key="6"/>
<evidence type="ECO:0000305" key="7">
    <source>
    </source>
</evidence>
<gene>
    <name evidence="5" type="primary">merP</name>
</gene>
<organism>
    <name type="scientific">Pseudomonas aeruginosa</name>
    <dbReference type="NCBI Taxonomy" id="287"/>
    <lineage>
        <taxon>Bacteria</taxon>
        <taxon>Pseudomonadati</taxon>
        <taxon>Pseudomonadota</taxon>
        <taxon>Gammaproteobacteria</taxon>
        <taxon>Pseudomonadales</taxon>
        <taxon>Pseudomonadaceae</taxon>
        <taxon>Pseudomonas</taxon>
    </lineage>
</organism>
<accession>P04131</accession>
<sequence>MKKLFASLALAAVVAPVWAATQTVTLSVPGMTCSACPITVKKAISEVEGVSKVDVTFETRQAVVTFDDAKTSVQKLTKATADAGYPSSVKQ</sequence>
<keyword id="KW-0475">Mercuric resistance</keyword>
<keyword id="KW-0476">Mercury</keyword>
<keyword id="KW-0479">Metal-binding</keyword>
<keyword id="KW-0574">Periplasm</keyword>
<keyword id="KW-0614">Plasmid</keyword>
<keyword id="KW-0732">Signal</keyword>
<keyword id="KW-0814">Transposable element</keyword>
<protein>
    <recommendedName>
        <fullName evidence="6">Mercuric transport protein periplasmic component</fullName>
    </recommendedName>
    <alternativeName>
        <fullName evidence="6">Mercury scavenger protein</fullName>
    </alternativeName>
    <alternativeName>
        <fullName evidence="6">Periplasmic mercury ion-binding protein</fullName>
    </alternativeName>
</protein>
<dbReference type="EMBL" id="Z00027">
    <property type="protein sequence ID" value="CAA77322.1"/>
    <property type="molecule type" value="Genomic_DNA"/>
</dbReference>
<dbReference type="EMBL" id="K02503">
    <property type="protein sequence ID" value="AAA27434.1"/>
    <property type="molecule type" value="Genomic_DNA"/>
</dbReference>
<dbReference type="PIR" id="A03557">
    <property type="entry name" value="RGPSHA"/>
</dbReference>
<dbReference type="SMR" id="P04131"/>
<dbReference type="eggNOG" id="COG2608">
    <property type="taxonomic scope" value="Bacteria"/>
</dbReference>
<dbReference type="GO" id="GO:0042597">
    <property type="term" value="C:periplasmic space"/>
    <property type="evidence" value="ECO:0007669"/>
    <property type="project" value="UniProtKB-SubCell"/>
</dbReference>
<dbReference type="GO" id="GO:0045340">
    <property type="term" value="F:mercury ion binding"/>
    <property type="evidence" value="ECO:0007669"/>
    <property type="project" value="InterPro"/>
</dbReference>
<dbReference type="GO" id="GO:0015097">
    <property type="term" value="F:mercury ion transmembrane transporter activity"/>
    <property type="evidence" value="ECO:0007669"/>
    <property type="project" value="InterPro"/>
</dbReference>
<dbReference type="CDD" id="cd00371">
    <property type="entry name" value="HMA"/>
    <property type="match status" value="1"/>
</dbReference>
<dbReference type="FunFam" id="3.30.70.100:FF:000005">
    <property type="entry name" value="Copper-exporting P-type ATPase A"/>
    <property type="match status" value="1"/>
</dbReference>
<dbReference type="Gene3D" id="3.30.70.100">
    <property type="match status" value="1"/>
</dbReference>
<dbReference type="InterPro" id="IPR017969">
    <property type="entry name" value="Heavy-metal-associated_CS"/>
</dbReference>
<dbReference type="InterPro" id="IPR006121">
    <property type="entry name" value="HMA_dom"/>
</dbReference>
<dbReference type="InterPro" id="IPR036163">
    <property type="entry name" value="HMA_dom_sf"/>
</dbReference>
<dbReference type="InterPro" id="IPR011795">
    <property type="entry name" value="MerP"/>
</dbReference>
<dbReference type="InterPro" id="IPR001802">
    <property type="entry name" value="MerP/CopZ"/>
</dbReference>
<dbReference type="NCBIfam" id="TIGR02052">
    <property type="entry name" value="MerP"/>
    <property type="match status" value="1"/>
</dbReference>
<dbReference type="PANTHER" id="PTHR46594">
    <property type="entry name" value="P-TYPE CATION-TRANSPORTING ATPASE"/>
    <property type="match status" value="1"/>
</dbReference>
<dbReference type="PANTHER" id="PTHR46594:SF4">
    <property type="entry name" value="P-TYPE CATION-TRANSPORTING ATPASE"/>
    <property type="match status" value="1"/>
</dbReference>
<dbReference type="Pfam" id="PF00403">
    <property type="entry name" value="HMA"/>
    <property type="match status" value="1"/>
</dbReference>
<dbReference type="PRINTS" id="PR00946">
    <property type="entry name" value="HGSCAVENGER"/>
</dbReference>
<dbReference type="SUPFAM" id="SSF55008">
    <property type="entry name" value="HMA, heavy metal-associated domain"/>
    <property type="match status" value="1"/>
</dbReference>
<dbReference type="PROSITE" id="PS01047">
    <property type="entry name" value="HMA_1"/>
    <property type="match status" value="1"/>
</dbReference>
<dbReference type="PROSITE" id="PS50846">
    <property type="entry name" value="HMA_2"/>
    <property type="match status" value="1"/>
</dbReference>
<feature type="signal peptide" evidence="2">
    <location>
        <begin position="1"/>
        <end position="19"/>
    </location>
</feature>
<feature type="chain" id="PRO_0000021674" description="Mercuric transport protein periplasmic component">
    <location>
        <begin position="20"/>
        <end position="91"/>
    </location>
</feature>
<feature type="domain" description="HMA" evidence="3">
    <location>
        <begin position="22"/>
        <end position="88"/>
    </location>
</feature>
<feature type="binding site" evidence="3">
    <location>
        <position position="33"/>
    </location>
    <ligand>
        <name>Hg(2+)</name>
        <dbReference type="ChEBI" id="CHEBI:16793"/>
    </ligand>
</feature>
<feature type="binding site" evidence="3">
    <location>
        <position position="36"/>
    </location>
    <ligand>
        <name>Hg(2+)</name>
        <dbReference type="ChEBI" id="CHEBI:16793"/>
    </ligand>
</feature>
<name>MERP_PSEAI</name>
<reference key="1">
    <citation type="journal article" date="1984" name="Proc. Natl. Acad. Sci. U.S.A.">
        <title>Mercuric ion-resistance operons of plasmid R100 and transposon Tn501: the beginning of the operon including the regulatory region and the first two structural genes.</title>
        <authorList>
            <person name="Misra T.K."/>
            <person name="Brown N.L."/>
            <person name="Fritzinger D.C."/>
            <person name="Pridmore R.D."/>
            <person name="Barnes W.M."/>
            <person name="Haberstroh L."/>
            <person name="Silver S."/>
        </authorList>
    </citation>
    <scope>NUCLEOTIDE SEQUENCE [GENOMIC DNA]</scope>
    <scope>PROBABLE FUNCTION</scope>
    <source>
        <transposon>Tn501</transposon>
    </source>
</reference>
<reference key="2">
    <citation type="journal article" date="1987" name="Gene">
        <title>Role of the merT and merP gene products of transposon Tn501 in the induction and expression of resistance to mercuric ions.</title>
        <authorList>
            <person name="Lund P.A."/>
            <person name="Brown N.L."/>
        </authorList>
    </citation>
    <scope>FUNCTION</scope>
    <scope>DISRUPTION PHENOTYPE</scope>
</reference>
<comment type="function">
    <text evidence="4 7">Involved in mercury resistance (PubMed:3038684). Acts as a mercury scavenger that specifically binds to a mercuric ion in the periplasm and probably passes it to the cytoplasmic mercuric reductase MerA via the mercuric transport protein MerT (Probable).</text>
</comment>
<comment type="subunit">
    <text evidence="1">Monomer.</text>
</comment>
<comment type="subcellular location">
    <subcellularLocation>
        <location evidence="1">Periplasm</location>
    </subcellularLocation>
</comment>
<comment type="disruption phenotype">
    <text evidence="4">Merp-merT deletion mutant is unable to transport mercury into the cytoplasm and shows almost complete loss of the resistance phenotype.</text>
</comment>
<comment type="similarity">
    <text evidence="6">Belongs to the MerP family.</text>
</comment>
<proteinExistence type="inferred from homology"/>
<geneLocation type="plasmid">
    <name>pVS1</name>
</geneLocation>